<gene>
    <name evidence="1" type="primary">miaA</name>
    <name type="ordered locus">Cyan7425_2991</name>
</gene>
<name>MIAA_CYAP4</name>
<comment type="function">
    <text evidence="1">Catalyzes the transfer of a dimethylallyl group onto the adenine at position 37 in tRNAs that read codons beginning with uridine, leading to the formation of N6-(dimethylallyl)adenosine (i(6)A).</text>
</comment>
<comment type="catalytic activity">
    <reaction evidence="1">
        <text>adenosine(37) in tRNA + dimethylallyl diphosphate = N(6)-dimethylallyladenosine(37) in tRNA + diphosphate</text>
        <dbReference type="Rhea" id="RHEA:26482"/>
        <dbReference type="Rhea" id="RHEA-COMP:10162"/>
        <dbReference type="Rhea" id="RHEA-COMP:10375"/>
        <dbReference type="ChEBI" id="CHEBI:33019"/>
        <dbReference type="ChEBI" id="CHEBI:57623"/>
        <dbReference type="ChEBI" id="CHEBI:74411"/>
        <dbReference type="ChEBI" id="CHEBI:74415"/>
        <dbReference type="EC" id="2.5.1.75"/>
    </reaction>
</comment>
<comment type="cofactor">
    <cofactor evidence="1">
        <name>Mg(2+)</name>
        <dbReference type="ChEBI" id="CHEBI:18420"/>
    </cofactor>
</comment>
<comment type="subunit">
    <text evidence="1">Monomer.</text>
</comment>
<comment type="similarity">
    <text evidence="1">Belongs to the IPP transferase family.</text>
</comment>
<reference key="1">
    <citation type="journal article" date="2011" name="MBio">
        <title>Novel metabolic attributes of the genus Cyanothece, comprising a group of unicellular nitrogen-fixing Cyanobacteria.</title>
        <authorList>
            <person name="Bandyopadhyay A."/>
            <person name="Elvitigala T."/>
            <person name="Welsh E."/>
            <person name="Stockel J."/>
            <person name="Liberton M."/>
            <person name="Min H."/>
            <person name="Sherman L.A."/>
            <person name="Pakrasi H.B."/>
        </authorList>
    </citation>
    <scope>NUCLEOTIDE SEQUENCE [LARGE SCALE GENOMIC DNA]</scope>
    <source>
        <strain>PCC 7425 / ATCC 29141</strain>
    </source>
</reference>
<accession>B8HLW6</accession>
<sequence length="300" mass="33788">MELFLNLESRPGLIVICGPTATGKSGLAIALAEYLNTVILSADSRQVYKEFDIGTAKPTVQERQQVAHYLIDICEPTDNCTLAQYQEQANQLIQHFHQQGKTPLLVGGTGLYIQAVTEGLIIPRVAPQVELRSQLAQLAQTQLYAYLQQVDPVSAQRIHANDQVRTLRALEVYYVTGIPLSQQQGRNPPSYPICKIGLESEQLTHRIQQRTLQMLEKGWLAEVEFLLKQYGDDLPLLKTLGYAEMKQHIAGETSLEEAIQLTVLHTRQFAKRQRTWFRADAEITWLNGDDAQLLEKLQPG</sequence>
<dbReference type="EC" id="2.5.1.75" evidence="1"/>
<dbReference type="EMBL" id="CP001344">
    <property type="protein sequence ID" value="ACL45326.1"/>
    <property type="molecule type" value="Genomic_DNA"/>
</dbReference>
<dbReference type="SMR" id="B8HLW6"/>
<dbReference type="STRING" id="395961.Cyan7425_2991"/>
<dbReference type="KEGG" id="cyn:Cyan7425_2991"/>
<dbReference type="eggNOG" id="COG0324">
    <property type="taxonomic scope" value="Bacteria"/>
</dbReference>
<dbReference type="HOGENOM" id="CLU_032616_0_1_3"/>
<dbReference type="OrthoDB" id="9776390at2"/>
<dbReference type="GO" id="GO:0005524">
    <property type="term" value="F:ATP binding"/>
    <property type="evidence" value="ECO:0007669"/>
    <property type="project" value="UniProtKB-UniRule"/>
</dbReference>
<dbReference type="GO" id="GO:0052381">
    <property type="term" value="F:tRNA dimethylallyltransferase activity"/>
    <property type="evidence" value="ECO:0007669"/>
    <property type="project" value="UniProtKB-UniRule"/>
</dbReference>
<dbReference type="GO" id="GO:0006400">
    <property type="term" value="P:tRNA modification"/>
    <property type="evidence" value="ECO:0007669"/>
    <property type="project" value="TreeGrafter"/>
</dbReference>
<dbReference type="Gene3D" id="1.10.20.140">
    <property type="match status" value="1"/>
</dbReference>
<dbReference type="Gene3D" id="3.40.50.300">
    <property type="entry name" value="P-loop containing nucleotide triphosphate hydrolases"/>
    <property type="match status" value="1"/>
</dbReference>
<dbReference type="HAMAP" id="MF_00185">
    <property type="entry name" value="IPP_trans"/>
    <property type="match status" value="1"/>
</dbReference>
<dbReference type="InterPro" id="IPR039657">
    <property type="entry name" value="Dimethylallyltransferase"/>
</dbReference>
<dbReference type="InterPro" id="IPR018022">
    <property type="entry name" value="IPT"/>
</dbReference>
<dbReference type="InterPro" id="IPR027417">
    <property type="entry name" value="P-loop_NTPase"/>
</dbReference>
<dbReference type="NCBIfam" id="TIGR00174">
    <property type="entry name" value="miaA"/>
    <property type="match status" value="1"/>
</dbReference>
<dbReference type="PANTHER" id="PTHR11088">
    <property type="entry name" value="TRNA DIMETHYLALLYLTRANSFERASE"/>
    <property type="match status" value="1"/>
</dbReference>
<dbReference type="PANTHER" id="PTHR11088:SF60">
    <property type="entry name" value="TRNA DIMETHYLALLYLTRANSFERASE"/>
    <property type="match status" value="1"/>
</dbReference>
<dbReference type="Pfam" id="PF01715">
    <property type="entry name" value="IPPT"/>
    <property type="match status" value="1"/>
</dbReference>
<dbReference type="SUPFAM" id="SSF52540">
    <property type="entry name" value="P-loop containing nucleoside triphosphate hydrolases"/>
    <property type="match status" value="1"/>
</dbReference>
<organism>
    <name type="scientific">Cyanothece sp. (strain PCC 7425 / ATCC 29141)</name>
    <dbReference type="NCBI Taxonomy" id="395961"/>
    <lineage>
        <taxon>Bacteria</taxon>
        <taxon>Bacillati</taxon>
        <taxon>Cyanobacteriota</taxon>
        <taxon>Cyanophyceae</taxon>
        <taxon>Gomontiellales</taxon>
        <taxon>Cyanothecaceae</taxon>
        <taxon>Cyanothece</taxon>
    </lineage>
</organism>
<evidence type="ECO:0000255" key="1">
    <source>
        <dbReference type="HAMAP-Rule" id="MF_00185"/>
    </source>
</evidence>
<keyword id="KW-0067">ATP-binding</keyword>
<keyword id="KW-0460">Magnesium</keyword>
<keyword id="KW-0547">Nucleotide-binding</keyword>
<keyword id="KW-0808">Transferase</keyword>
<keyword id="KW-0819">tRNA processing</keyword>
<feature type="chain" id="PRO_0000377134" description="tRNA dimethylallyltransferase">
    <location>
        <begin position="1"/>
        <end position="300"/>
    </location>
</feature>
<feature type="region of interest" description="Interaction with substrate tRNA" evidence="1">
    <location>
        <begin position="43"/>
        <end position="46"/>
    </location>
</feature>
<feature type="binding site" evidence="1">
    <location>
        <begin position="18"/>
        <end position="25"/>
    </location>
    <ligand>
        <name>ATP</name>
        <dbReference type="ChEBI" id="CHEBI:30616"/>
    </ligand>
</feature>
<feature type="binding site" evidence="1">
    <location>
        <begin position="20"/>
        <end position="25"/>
    </location>
    <ligand>
        <name>substrate</name>
    </ligand>
</feature>
<feature type="site" description="Interaction with substrate tRNA" evidence="1">
    <location>
        <position position="109"/>
    </location>
</feature>
<proteinExistence type="inferred from homology"/>
<protein>
    <recommendedName>
        <fullName evidence="1">tRNA dimethylallyltransferase</fullName>
        <ecNumber evidence="1">2.5.1.75</ecNumber>
    </recommendedName>
    <alternativeName>
        <fullName evidence="1">Dimethylallyl diphosphate:tRNA dimethylallyltransferase</fullName>
        <shortName evidence="1">DMAPP:tRNA dimethylallyltransferase</shortName>
        <shortName evidence="1">DMATase</shortName>
    </alternativeName>
    <alternativeName>
        <fullName evidence="1">Isopentenyl-diphosphate:tRNA isopentenyltransferase</fullName>
        <shortName evidence="1">IPP transferase</shortName>
        <shortName evidence="1">IPPT</shortName>
        <shortName evidence="1">IPTase</shortName>
    </alternativeName>
</protein>